<proteinExistence type="inferred from homology"/>
<feature type="chain" id="PRO_0000432916" description="SecB-like chaperone SmegB">
    <location>
        <begin position="1"/>
        <end position="146"/>
    </location>
</feature>
<reference key="1">
    <citation type="submission" date="2006-10" db="EMBL/GenBank/DDBJ databases">
        <authorList>
            <person name="Fleischmann R.D."/>
            <person name="Dodson R.J."/>
            <person name="Haft D.H."/>
            <person name="Merkel J.S."/>
            <person name="Nelson W.C."/>
            <person name="Fraser C.M."/>
        </authorList>
    </citation>
    <scope>NUCLEOTIDE SEQUENCE [LARGE SCALE GENOMIC DNA]</scope>
    <source>
        <strain>ATCC 700084 / mc(2)155</strain>
    </source>
</reference>
<reference key="2">
    <citation type="journal article" date="2007" name="Genome Biol.">
        <title>Interrupted coding sequences in Mycobacterium smegmatis: authentic mutations or sequencing errors?</title>
        <authorList>
            <person name="Deshayes C."/>
            <person name="Perrodou E."/>
            <person name="Gallien S."/>
            <person name="Euphrasie D."/>
            <person name="Schaeffer C."/>
            <person name="Van-Dorsselaer A."/>
            <person name="Poch O."/>
            <person name="Lecompte O."/>
            <person name="Reyrat J.-M."/>
        </authorList>
    </citation>
    <scope>NUCLEOTIDE SEQUENCE [LARGE SCALE GENOMIC DNA]</scope>
    <source>
        <strain>ATCC 700084 / mc(2)155</strain>
    </source>
</reference>
<reference key="3">
    <citation type="journal article" date="2009" name="Genome Res.">
        <title>Ortho-proteogenomics: multiple proteomes investigation through orthology and a new MS-based protocol.</title>
        <authorList>
            <person name="Gallien S."/>
            <person name="Perrodou E."/>
            <person name="Carapito C."/>
            <person name="Deshayes C."/>
            <person name="Reyrat J.-M."/>
            <person name="Van Dorsselaer A."/>
            <person name="Poch O."/>
            <person name="Schaeffer C."/>
            <person name="Lecompte O."/>
        </authorList>
    </citation>
    <scope>NUCLEOTIDE SEQUENCE [LARGE SCALE GENOMIC DNA]</scope>
    <source>
        <strain>ATCC 700084 / mc(2)155</strain>
    </source>
</reference>
<reference key="4">
    <citation type="journal article" date="2015" name="Genome Announc.">
        <title>Complete genome sequences of a Mycobacterium smegmatis laboratory strain (MC2 155) and isoniazid-resistant (4XR1/R2) mutant strains.</title>
        <authorList>
            <person name="Mohan A."/>
            <person name="Padiadpu J."/>
            <person name="Baloni P."/>
            <person name="Chandra N."/>
        </authorList>
    </citation>
    <scope>NUCLEOTIDE SEQUENCE [LARGE SCALE GENOMIC DNA]</scope>
    <source>
        <strain>ATCC 700084 / mc(2)155</strain>
    </source>
</reference>
<reference key="5">
    <citation type="journal article" date="2013" name="Cell Stress Chaperones">
        <title>TAC from Mycobacterium tuberculosis: a paradigm for stress-responsive toxin-antitoxin systems controlled by SecB-like chaperones.</title>
        <authorList>
            <person name="Sala A."/>
            <person name="Calderon V."/>
            <person name="Bordes P."/>
            <person name="Genevaux P."/>
        </authorList>
    </citation>
    <scope>FUNCTION</scope>
    <scope>EXPRESSION IN E.COLI AND M.TUBERCULOSIS</scope>
    <source>
        <strain>ATCC 700084 / mc(2)155</strain>
    </source>
</reference>
<protein>
    <recommendedName>
        <fullName evidence="2">SecB-like chaperone SmegB</fullName>
    </recommendedName>
</protein>
<gene>
    <name evidence="2" type="primary">secBL</name>
    <name type="ordered locus">MSMEG_2143</name>
    <name type="ordered locus">MSMEI_2092</name>
    <name type="ORF">LJ00_10675</name>
</gene>
<evidence type="ECO:0000269" key="1">
    <source>
    </source>
</evidence>
<evidence type="ECO:0000303" key="2">
    <source>
    </source>
</evidence>
<evidence type="ECO:0000305" key="3"/>
<comment type="function">
    <text evidence="1">Chaperone component of an orphan antitoxin chaperone (AC) system; there is no toxin gene in close genomic proximity. When expressed in E.coli complements the cold-sensitive phenotype of a secB deletion, suggesting it may have a generic chaperone function. Does not however complement the toxin-neutralizing effect of its M.tuberculosis paralog Rv1957 (AC P95257) in E.coli, probably because the antitoxin genes are not from the same family.</text>
</comment>
<comment type="similarity">
    <text evidence="3">Belongs to the SecB-like family.</text>
</comment>
<keyword id="KW-0143">Chaperone</keyword>
<keyword id="KW-1185">Reference proteome</keyword>
<dbReference type="EMBL" id="CP000480">
    <property type="protein sequence ID" value="ABK76162.1"/>
    <property type="molecule type" value="Genomic_DNA"/>
</dbReference>
<dbReference type="EMBL" id="CP001663">
    <property type="protein sequence ID" value="AFP38562.1"/>
    <property type="molecule type" value="Genomic_DNA"/>
</dbReference>
<dbReference type="EMBL" id="CP009494">
    <property type="protein sequence ID" value="AIU07346.1"/>
    <property type="molecule type" value="Genomic_DNA"/>
</dbReference>
<dbReference type="RefSeq" id="WP_011728187.1">
    <property type="nucleotide sequence ID" value="NZ_SIJM01000021.1"/>
</dbReference>
<dbReference type="RefSeq" id="YP_886500.1">
    <property type="nucleotide sequence ID" value="NC_008596.1"/>
</dbReference>
<dbReference type="SMR" id="A0QUB2"/>
<dbReference type="STRING" id="246196.MSMEG_2143"/>
<dbReference type="PaxDb" id="246196-MSMEI_2092"/>
<dbReference type="GeneID" id="93456943"/>
<dbReference type="KEGG" id="msb:LJ00_10675"/>
<dbReference type="KEGG" id="msg:MSMEI_2092"/>
<dbReference type="KEGG" id="msm:MSMEG_2143"/>
<dbReference type="PATRIC" id="fig|246196.56.peg.2145"/>
<dbReference type="eggNOG" id="ENOG5033GFD">
    <property type="taxonomic scope" value="Bacteria"/>
</dbReference>
<dbReference type="HOGENOM" id="CLU_1739116_0_0_11"/>
<dbReference type="OrthoDB" id="4236906at2"/>
<dbReference type="Proteomes" id="UP000000757">
    <property type="component" value="Chromosome"/>
</dbReference>
<dbReference type="Proteomes" id="UP000006158">
    <property type="component" value="Chromosome"/>
</dbReference>
<dbReference type="InterPro" id="IPR035958">
    <property type="entry name" value="SecB-like_sf"/>
</dbReference>
<dbReference type="SUPFAM" id="SSF54611">
    <property type="entry name" value="SecB-like"/>
    <property type="match status" value="1"/>
</dbReference>
<organism>
    <name type="scientific">Mycolicibacterium smegmatis (strain ATCC 700084 / mc(2)155)</name>
    <name type="common">Mycobacterium smegmatis</name>
    <dbReference type="NCBI Taxonomy" id="246196"/>
    <lineage>
        <taxon>Bacteria</taxon>
        <taxon>Bacillati</taxon>
        <taxon>Actinomycetota</taxon>
        <taxon>Actinomycetes</taxon>
        <taxon>Mycobacteriales</taxon>
        <taxon>Mycobacteriaceae</taxon>
        <taxon>Mycolicibacterium</taxon>
    </lineage>
</organism>
<sequence length="146" mass="15706">MIERDGAPTFEDVQELLNRSELTDVALYEHAGRRVDDAVDDEFSLQVLTRVGDTEFEIRCKVTAAGHGGQYLADAGAVFTLQSAAKIEEGTAREFAEKVGVMAVYPYLRAAVSQSAASLGLDRPILPLLRAGGVKLTESMDSAEDA</sequence>
<accession>A0QUB2</accession>
<name>SECBL_MYCS2</name>